<name>L_SBVBH</name>
<feature type="chain" id="PRO_0000422476" description="RNA-directed RNA polymerase L">
    <location>
        <begin position="1"/>
        <end position="2254"/>
    </location>
</feature>
<feature type="domain" description="RdRp catalytic" evidence="6">
    <location>
        <begin position="1023"/>
        <end position="1214"/>
    </location>
</feature>
<proteinExistence type="inferred from homology"/>
<protein>
    <recommendedName>
        <fullName>RNA-directed RNA polymerase L</fullName>
        <shortName>Protein L</shortName>
        <ecNumber evidence="3">2.7.7.48</ecNumber>
    </recommendedName>
    <alternativeName>
        <fullName>Large structural protein</fullName>
    </alternativeName>
    <alternativeName>
        <fullName>Replicase</fullName>
    </alternativeName>
    <alternativeName>
        <fullName>Transcriptase</fullName>
    </alternativeName>
    <domain>
        <recommendedName>
            <fullName>cap-snatching endonuclease</fullName>
            <ecNumber evidence="2">3.1.-.-</ecNumber>
        </recommendedName>
    </domain>
</protein>
<gene>
    <name type="primary">L</name>
</gene>
<accession>H2AM11</accession>
<comment type="function">
    <text evidence="2 3 4">RNA-dependent RNA polymerase, which is responsible for the replication and transcription of the viral RNA genome using antigenomic RNA as an intermediate (By similarity). During transcription, synthesizes subgenomic RNAs and assures their capping by a cap-snatching mechanism, which involves the endonuclease activity cleaving the host capped pre-mRNAs (By similarity). These short capped RNAs are then used as primers for viral transcription. The 3'-end of subgenomic mRNAs molecules are not polyadenylated. During replication, the polymerase binds the 5' and 3' vRNA extremities at distinct sites (By similarity). In turn, significant conformational changes occur in the polymerase and in vRNA to initiate active RNA synthesis (By similarity). As a consequence of the use of the same enzyme for both transcription and replication, these mechanisms need to be well coordinated (By similarity).</text>
</comment>
<comment type="catalytic activity">
    <reaction evidence="6">
        <text>RNA(n) + a ribonucleoside 5'-triphosphate = RNA(n+1) + diphosphate</text>
        <dbReference type="Rhea" id="RHEA:21248"/>
        <dbReference type="Rhea" id="RHEA-COMP:14527"/>
        <dbReference type="Rhea" id="RHEA-COMP:17342"/>
        <dbReference type="ChEBI" id="CHEBI:33019"/>
        <dbReference type="ChEBI" id="CHEBI:61557"/>
        <dbReference type="ChEBI" id="CHEBI:140395"/>
        <dbReference type="EC" id="2.7.7.48"/>
    </reaction>
</comment>
<comment type="cofactor">
    <cofactor evidence="2">
        <name>Mn(2+)</name>
        <dbReference type="ChEBI" id="CHEBI:29035"/>
    </cofactor>
    <text evidence="2">For endonuclease activity. Binds 2 Mn(2+) ions in the active site (By similarity). The divalent metal ions are crucial for catalytic activity (By similarity).</text>
</comment>
<comment type="cofactor">
    <cofactor evidence="1">
        <name>Mg(2+)</name>
        <dbReference type="ChEBI" id="CHEBI:18420"/>
    </cofactor>
    <cofactor evidence="1">
        <name>Mn(2+)</name>
        <dbReference type="ChEBI" id="CHEBI:29035"/>
    </cofactor>
    <text evidence="1">For polymerase activity. Initiation activity is stronger in the presence of Mn(2+) than in the presence of Mg(2+).</text>
</comment>
<comment type="subunit">
    <text evidence="5">Homomultimer (By similarity). Interacts with the glycoprotein N; this interaction allows efficient polymerase packaging into virus particles (By similarity). Interacts with nucleoprotein N (By similarity).</text>
</comment>
<comment type="subcellular location">
    <subcellularLocation>
        <location evidence="3">Host Golgi apparatus</location>
    </subcellularLocation>
    <subcellularLocation>
        <location evidence="3">Host endoplasmic reticulum</location>
    </subcellularLocation>
    <subcellularLocation>
        <location evidence="3">Host endoplasmic reticulum-Golgi intermediate compartment</location>
    </subcellularLocation>
    <subcellularLocation>
        <location evidence="4">Virion</location>
    </subcellularLocation>
</comment>
<comment type="domain">
    <text evidence="1 2 3">The N-terminus contains the endonuclease activity (endoN) (By similarity). The central region contains the RdRp activity (By similarity). The C-terminus contains the cap-binding region (By similarity).</text>
</comment>
<comment type="miscellaneous">
    <text evidence="7">Classified as His(+) endonuclease since it has a histidine upstream of the active site that coordinates the first cation.</text>
</comment>
<comment type="similarity">
    <text evidence="8">Belongs to the Bunyavirales RNA polymerase family.</text>
</comment>
<dbReference type="EC" id="2.7.7.48" evidence="3"/>
<dbReference type="EC" id="3.1.-.-" evidence="2"/>
<dbReference type="EMBL" id="JX853179">
    <property type="protein sequence ID" value="AGC84160.1"/>
    <property type="molecule type" value="Viral_cRNA"/>
</dbReference>
<dbReference type="EMBL" id="HE649912">
    <property type="protein sequence ID" value="CCF55029.1"/>
    <property type="molecule type" value="Genomic_RNA"/>
</dbReference>
<dbReference type="SMR" id="H2AM11"/>
<dbReference type="GO" id="GO:0044165">
    <property type="term" value="C:host cell endoplasmic reticulum"/>
    <property type="evidence" value="ECO:0007669"/>
    <property type="project" value="UniProtKB-SubCell"/>
</dbReference>
<dbReference type="GO" id="GO:0044172">
    <property type="term" value="C:host cell endoplasmic reticulum-Golgi intermediate compartment"/>
    <property type="evidence" value="ECO:0007669"/>
    <property type="project" value="UniProtKB-SubCell"/>
</dbReference>
<dbReference type="GO" id="GO:0044177">
    <property type="term" value="C:host cell Golgi apparatus"/>
    <property type="evidence" value="ECO:0007669"/>
    <property type="project" value="UniProtKB-SubCell"/>
</dbReference>
<dbReference type="GO" id="GO:0044423">
    <property type="term" value="C:virion component"/>
    <property type="evidence" value="ECO:0007669"/>
    <property type="project" value="UniProtKB-KW"/>
</dbReference>
<dbReference type="GO" id="GO:0008234">
    <property type="term" value="F:cysteine-type peptidase activity"/>
    <property type="evidence" value="ECO:0007669"/>
    <property type="project" value="UniProtKB-KW"/>
</dbReference>
<dbReference type="GO" id="GO:0000166">
    <property type="term" value="F:nucleotide binding"/>
    <property type="evidence" value="ECO:0007669"/>
    <property type="project" value="UniProtKB-KW"/>
</dbReference>
<dbReference type="GO" id="GO:0003968">
    <property type="term" value="F:RNA-directed RNA polymerase activity"/>
    <property type="evidence" value="ECO:0007669"/>
    <property type="project" value="UniProtKB-KW"/>
</dbReference>
<dbReference type="GO" id="GO:0006351">
    <property type="term" value="P:DNA-templated transcription"/>
    <property type="evidence" value="ECO:0007669"/>
    <property type="project" value="InterPro"/>
</dbReference>
<dbReference type="GO" id="GO:0039689">
    <property type="term" value="P:negative stranded viral RNA replication"/>
    <property type="evidence" value="ECO:0000250"/>
    <property type="project" value="UniProtKB"/>
</dbReference>
<dbReference type="GO" id="GO:0006508">
    <property type="term" value="P:proteolysis"/>
    <property type="evidence" value="ECO:0007669"/>
    <property type="project" value="UniProtKB-KW"/>
</dbReference>
<dbReference type="GO" id="GO:0039696">
    <property type="term" value="P:RNA-templated viral transcription"/>
    <property type="evidence" value="ECO:0000250"/>
    <property type="project" value="UniProtKB"/>
</dbReference>
<dbReference type="CDD" id="cd22349">
    <property type="entry name" value="PDDEXK_RNA_polymerase-like"/>
    <property type="match status" value="1"/>
</dbReference>
<dbReference type="FunFam" id="3.40.91.60:FF:000001">
    <property type="entry name" value="RNA-directed RNA polymerase L"/>
    <property type="match status" value="1"/>
</dbReference>
<dbReference type="Gene3D" id="3.40.91.60">
    <property type="match status" value="1"/>
</dbReference>
<dbReference type="InterPro" id="IPR048006">
    <property type="entry name" value="CapSnatch_bunyavir"/>
</dbReference>
<dbReference type="InterPro" id="IPR029124">
    <property type="entry name" value="L_protein_N"/>
</dbReference>
<dbReference type="InterPro" id="IPR048547">
    <property type="entry name" value="L_thumb_ring_bunyavir"/>
</dbReference>
<dbReference type="InterPro" id="IPR007099">
    <property type="entry name" value="RNA-dir_pol_NSvirus"/>
</dbReference>
<dbReference type="InterPro" id="IPR007322">
    <property type="entry name" value="RNA_pol_bunyavir"/>
</dbReference>
<dbReference type="NCBIfam" id="TIGR04202">
    <property type="entry name" value="capSnatchArena"/>
    <property type="match status" value="1"/>
</dbReference>
<dbReference type="Pfam" id="PF04196">
    <property type="entry name" value="Bunya_RdRp"/>
    <property type="match status" value="1"/>
</dbReference>
<dbReference type="Pfam" id="PF15518">
    <property type="entry name" value="L_protein_N"/>
    <property type="match status" value="1"/>
</dbReference>
<dbReference type="Pfam" id="PF21561">
    <property type="entry name" value="L_thumb_ring_vir"/>
    <property type="match status" value="1"/>
</dbReference>
<dbReference type="PROSITE" id="PS50525">
    <property type="entry name" value="RDRP_SSRNA_NEG_SEG"/>
    <property type="match status" value="1"/>
</dbReference>
<keyword id="KW-1038">Host endoplasmic reticulum</keyword>
<keyword id="KW-1040">Host Golgi apparatus</keyword>
<keyword id="KW-0378">Hydrolase</keyword>
<keyword id="KW-0460">Magnesium</keyword>
<keyword id="KW-0547">Nucleotide-binding</keyword>
<keyword id="KW-0548">Nucleotidyltransferase</keyword>
<keyword id="KW-0645">Protease</keyword>
<keyword id="KW-0696">RNA-directed RNA polymerase</keyword>
<keyword id="KW-0788">Thiol protease</keyword>
<keyword id="KW-0808">Transferase</keyword>
<keyword id="KW-0833">Ubl conjugation pathway</keyword>
<keyword id="KW-0693">Viral RNA replication</keyword>
<keyword id="KW-0946">Virion</keyword>
<reference key="1">
    <citation type="journal article" date="2012" name="Emerg. Infect. Dis.">
        <title>Novel orthobunyavirus in cattle, europe, 2011.</title>
        <authorList>
            <person name="Hoffmann B."/>
            <person name="Scheuch M."/>
            <person name="Hoper D."/>
            <person name="Jungblut R."/>
            <person name="Holsteg M."/>
            <person name="Schirrmeier H."/>
            <person name="Eschbaumer M."/>
            <person name="Goller K.V."/>
            <person name="Wernike K."/>
            <person name="Fischer M."/>
            <person name="Breithaupt A."/>
            <person name="Mettenleiter T.C."/>
            <person name="Beer M."/>
        </authorList>
    </citation>
    <scope>NUCLEOTIDE SEQUENCE [GENOMIC RNA]</scope>
</reference>
<reference key="2">
    <citation type="submission" date="2012-01" db="EMBL/GenBank/DDBJ databases">
        <authorList>
            <person name="Hoeper D."/>
        </authorList>
    </citation>
    <scope>NUCLEOTIDE SEQUENCE [GENOMIC RNA]</scope>
</reference>
<reference key="3">
    <citation type="journal article" date="2013" name="PLoS Pathog.">
        <title>Schmallenberg virus pathogenesis, tropism and interaction with the innate immune system of the host.</title>
        <authorList>
            <person name="Varela M."/>
            <person name="Schnettler E."/>
            <person name="Caporale M."/>
            <person name="Murgia C."/>
            <person name="Barry G."/>
            <person name="McFarlane M."/>
            <person name="McGregor E."/>
            <person name="Piras I.M."/>
            <person name="Shaw A."/>
            <person name="Lamm C."/>
            <person name="Janowicz A."/>
            <person name="Beer M."/>
            <person name="Glass M."/>
            <person name="Herder V."/>
            <person name="Hahn K."/>
            <person name="Baumgartner W."/>
            <person name="Kohl A."/>
            <person name="Palmarini M."/>
        </authorList>
    </citation>
    <scope>NUCLEOTIDE SEQUENCE [GENOMIC RNA]</scope>
    <source>
        <strain>Germany</strain>
    </source>
</reference>
<reference key="4">
    <citation type="journal article" date="2017" name="Crit. Rev. Microbiol.">
        <title>Bunyaviridae RdRps: structure, motifs, and RNA synthesis machinery.</title>
        <authorList>
            <person name="Amroun A."/>
            <person name="Priet S."/>
            <person name="de Lamballerie X."/>
            <person name="Querat G."/>
        </authorList>
    </citation>
    <scope>REVIEW</scope>
</reference>
<reference key="5">
    <citation type="journal article" date="2020" name="Trends Microbiol.">
        <title>The Cap-Snatching Mechanism of Bunyaviruses.</title>
        <authorList>
            <person name="Olschewski S."/>
            <person name="Cusack S."/>
            <person name="Rosenthal M."/>
        </authorList>
    </citation>
    <scope>REVIEW</scope>
</reference>
<evidence type="ECO:0000250" key="1">
    <source>
        <dbReference type="UniProtKB" id="A2SZS3"/>
    </source>
</evidence>
<evidence type="ECO:0000250" key="2">
    <source>
        <dbReference type="UniProtKB" id="A5HC98"/>
    </source>
</evidence>
<evidence type="ECO:0000250" key="3">
    <source>
        <dbReference type="UniProtKB" id="I0DF35"/>
    </source>
</evidence>
<evidence type="ECO:0000250" key="4">
    <source>
        <dbReference type="UniProtKB" id="P20470"/>
    </source>
</evidence>
<evidence type="ECO:0000250" key="5">
    <source>
        <dbReference type="UniProtKB" id="P27316"/>
    </source>
</evidence>
<evidence type="ECO:0000255" key="6">
    <source>
        <dbReference type="PROSITE-ProRule" id="PRU00539"/>
    </source>
</evidence>
<evidence type="ECO:0000303" key="7">
    <source>
    </source>
</evidence>
<evidence type="ECO:0000305" key="8"/>
<sequence length="2254" mass="261027">METYKINIFRDRINQCRSAEEAKDIVADLLMARHDYFGREVCYYLDIEFRQDVPAYDILLEFLPAGTAFNIRNCTPDNFIIHNGKLYIIDYKVSTDHAYGQKTYEKYTQIFGDALSELPFDFEVVIIRADPLRDTIHVNSNQFLEIFGPLNINLDFTWFFNLRSLIYEKYKDDDRFLEIVNQGEFTMTGPWIDEDTPELYSHPVFLEFYDSLDEMAKLTFHESMTFDATRGEKWNQNLQKVINRYGNDYNIFVKEAAAGIFRCEGNYPKPNHDEITIGWNQMVQRVSTERNLTQDVSKQKPSIHFIWGQPDETSNATTPKLIKIAKALQNISGESTYISAFRALGMLMDFSENTALYEAHTSKLKSMARQTSKRIDTKLEPIKIGTATIYWEQQFKLDTEIMNTKDKSHLLKDFLGIGGHVQFSKKTIDDLDTDKPTILDFNKKEVIDFCKFQYENVKKILSGDNNLERIGCYLEEYGANIASCSKDTWDQINQIGKSNYWACIKDFSVLMKNMLAVSQYNRHNTFRVVCCANNNLFGFVMPSSDIKAKRSTLVYFLAVLHSTPQNVMHHGALHATFKTGSKYLSISKGMRLDKERCQRIVSSPGLFMLTTLMFAGDNPTLNLTDVMNFTFHTSLSITKAMLSLTEPSRYMIMNSLAISSHVRDYIAEKFGPYTKTSFSVVMANLIKRGCYMAYNQRDKVDMRNICLTDYEITQKGVRDNRDLSSIWFEGYVSLKEYINQIYLPFYFNSKGLHEKHHVMIDLAKTILDIERDQRLNIPGIWSTTPRKQTANLNITIYAVAKNLIMDTARHNYIRSRIENTNNLNRSICTISTFTSSKSCIKVGDFEKEKSSATKKAADCMSKEIKKYTIANPEFVDEELLNATIRHSRYEDLKKAIPNYIDIMSTKVFDSLYQKIKRKEIDDKPTVYHILSAMKNHTDFKFTFFNKGQKTAKDREIFVGEFEAKMCLYLVERISKERCKLNPDEMISEPGDSKLKKLEELAESEIRFTAATMKQIKERYLAEMGEASHMIAYKPHSVKIEINADMSKWSAQDVLFKYFWLFALDPALYLQEKERILYFLCNYMQKKLILPDEMLCSILDQRIKHEDDIIYEMTNGLSQNWVNIKRNWLQGNLNYTSSYLHSCSMNVYKDILKRAATLLEGEVLVNSMVHSDDNHTSIVMIQDKLDDDIVIEFSAKLFEKICLTFGNQANMKKTYITNFIKEFVSLFNIYGEPFSVYGRFILTSVGDCAFLGPYEDVASRLSATQTAIKHGAPPSLAWTAIALTQWITHSTYNMLPGQINDPTSSLPSHDRFELPIELCGLINSELPTIAIAGLEADNLSYLVRLSKRMSPIHLCREPIQHQYENIHTWDISKLTQCDIFRLKLLRYMTLDSTMSSDDGMGETSEMRSRSLLTPRKFTTASSLSRLHSYADYQKTIQDQQKIEELFEYFIANPQLLVTKGETCEEFCMSVLFRYNSRKFKESLSIQNPAQLFIEQVLFANKPMIDYTSIHDRLFGIQDDPNINDATCIIGKKTFVETYQQIKIDVEKFTLDVEDIKTIYSFCIMNDPILVACANNLLISIQGVEMQRLGMTCCYMPEIKSLKVIYHSPALVLRAYVTDNYEQKGMEPDEMRRDIYHLEEFIEKTKLRTNMQGRIANNEIKLMKRDLKFEVQELTKFYQICYEYVKSTEHKIKIFILPKKAYTPIDFCSLVTGNLISDNKWMVVHYLKQITVPAKKAQIATSIDLEIQIAYECFRLIAHFADMFLNDDSKKAYINAIINTYTYKDVQVSSLYKKIKNSRLRSKIIPLLYHLGDLQQIDVDRFDAEKAEEQITWNNWQTSREFTTGPIDLSIKGYGRSIRIVGEDNKLTAAEMQLSRVRSDIVSRHGQALLNKPHGLKLEKMEPVTDLNPKLWYIAYQLREKKRYHYGVFSTSYIEEHNSRIEASRIRKTNKWIPVCPIAISKQSSDGKPSLAKIPMLNIGEIKFTKLQIAVDDHAMIRKAPFSKMVFFDGPPIQSGGIDIGKLMKNQNILNLRLDNIQSITLLDLCRIFSCRGSKVDQDAFEFLSDEPLDEDVIDELDSSPALVVSYTKKSTKSNSFKNVIVRALIRECDIFEDIMDITDDGFTSDSNLEVLENLTWILNMLATNQWSTELLACIHMCLYRNEMDHIYHNFQVPEIFVDNPISLNVKWDEVIMFLNILRDRDYKFEPWVSILNHSLTKAIEYAYKKMEEERKQKSTGINKFLKGKKMGGRSKFDFQ</sequence>
<organism>
    <name type="scientific">Bovine Schmallenberg virus (isolate Bovine/BH80/Germany/2011)</name>
    <name type="common">SBV</name>
    <dbReference type="NCBI Taxonomy" id="1318464"/>
    <lineage>
        <taxon>Viruses</taxon>
        <taxon>Riboviria</taxon>
        <taxon>Orthornavirae</taxon>
        <taxon>Negarnaviricota</taxon>
        <taxon>Polyploviricotina</taxon>
        <taxon>Ellioviricetes</taxon>
        <taxon>Bunyavirales</taxon>
        <taxon>Peribunyaviridae</taxon>
        <taxon>Orthobunyavirus</taxon>
        <taxon>Orthobunyavirus schmallenbergense</taxon>
    </lineage>
</organism>
<organismHost>
    <name type="scientific">Bos taurus</name>
    <name type="common">Bovine</name>
    <dbReference type="NCBI Taxonomy" id="9913"/>
</organismHost>
<organismHost>
    <name type="scientific">Ovis aries</name>
    <name type="common">Sheep</name>
    <dbReference type="NCBI Taxonomy" id="9940"/>
</organismHost>